<dbReference type="EC" id="1.11.1.21" evidence="1"/>
<dbReference type="EMBL" id="CP000959">
    <property type="protein sequence ID" value="ACA94208.1"/>
    <property type="molecule type" value="Genomic_DNA"/>
</dbReference>
<dbReference type="SMR" id="B1K6I9"/>
<dbReference type="GeneID" id="83051773"/>
<dbReference type="KEGG" id="bcm:Bcenmc03_5078"/>
<dbReference type="HOGENOM" id="CLU_025424_2_0_4"/>
<dbReference type="Proteomes" id="UP000002169">
    <property type="component" value="Chromosome 2"/>
</dbReference>
<dbReference type="GO" id="GO:0005829">
    <property type="term" value="C:cytosol"/>
    <property type="evidence" value="ECO:0007669"/>
    <property type="project" value="TreeGrafter"/>
</dbReference>
<dbReference type="GO" id="GO:0004096">
    <property type="term" value="F:catalase activity"/>
    <property type="evidence" value="ECO:0007669"/>
    <property type="project" value="UniProtKB-UniRule"/>
</dbReference>
<dbReference type="GO" id="GO:0020037">
    <property type="term" value="F:heme binding"/>
    <property type="evidence" value="ECO:0007669"/>
    <property type="project" value="InterPro"/>
</dbReference>
<dbReference type="GO" id="GO:0046872">
    <property type="term" value="F:metal ion binding"/>
    <property type="evidence" value="ECO:0007669"/>
    <property type="project" value="UniProtKB-KW"/>
</dbReference>
<dbReference type="GO" id="GO:0070301">
    <property type="term" value="P:cellular response to hydrogen peroxide"/>
    <property type="evidence" value="ECO:0007669"/>
    <property type="project" value="TreeGrafter"/>
</dbReference>
<dbReference type="GO" id="GO:0042744">
    <property type="term" value="P:hydrogen peroxide catabolic process"/>
    <property type="evidence" value="ECO:0007669"/>
    <property type="project" value="UniProtKB-KW"/>
</dbReference>
<dbReference type="CDD" id="cd00649">
    <property type="entry name" value="catalase_peroxidase_1"/>
    <property type="match status" value="1"/>
</dbReference>
<dbReference type="CDD" id="cd08200">
    <property type="entry name" value="catalase_peroxidase_2"/>
    <property type="match status" value="1"/>
</dbReference>
<dbReference type="FunFam" id="1.10.420.10:FF:000002">
    <property type="entry name" value="Catalase-peroxidase"/>
    <property type="match status" value="1"/>
</dbReference>
<dbReference type="FunFam" id="1.10.420.10:FF:000004">
    <property type="entry name" value="Catalase-peroxidase"/>
    <property type="match status" value="1"/>
</dbReference>
<dbReference type="FunFam" id="1.10.520.10:FF:000002">
    <property type="entry name" value="Catalase-peroxidase"/>
    <property type="match status" value="1"/>
</dbReference>
<dbReference type="Gene3D" id="1.10.520.10">
    <property type="match status" value="2"/>
</dbReference>
<dbReference type="Gene3D" id="1.10.420.10">
    <property type="entry name" value="Peroxidase, domain 2"/>
    <property type="match status" value="2"/>
</dbReference>
<dbReference type="HAMAP" id="MF_01961">
    <property type="entry name" value="Catal_peroxid"/>
    <property type="match status" value="1"/>
</dbReference>
<dbReference type="InterPro" id="IPR000763">
    <property type="entry name" value="Catalase_peroxidase"/>
</dbReference>
<dbReference type="InterPro" id="IPR002016">
    <property type="entry name" value="Haem_peroxidase"/>
</dbReference>
<dbReference type="InterPro" id="IPR010255">
    <property type="entry name" value="Haem_peroxidase_sf"/>
</dbReference>
<dbReference type="InterPro" id="IPR019794">
    <property type="entry name" value="Peroxidases_AS"/>
</dbReference>
<dbReference type="InterPro" id="IPR019793">
    <property type="entry name" value="Peroxidases_heam-ligand_BS"/>
</dbReference>
<dbReference type="NCBIfam" id="TIGR00198">
    <property type="entry name" value="cat_per_HPI"/>
    <property type="match status" value="1"/>
</dbReference>
<dbReference type="NCBIfam" id="NF011635">
    <property type="entry name" value="PRK15061.1"/>
    <property type="match status" value="1"/>
</dbReference>
<dbReference type="PANTHER" id="PTHR30555:SF0">
    <property type="entry name" value="CATALASE-PEROXIDASE"/>
    <property type="match status" value="1"/>
</dbReference>
<dbReference type="PANTHER" id="PTHR30555">
    <property type="entry name" value="HYDROPEROXIDASE I, BIFUNCTIONAL CATALASE-PEROXIDASE"/>
    <property type="match status" value="1"/>
</dbReference>
<dbReference type="Pfam" id="PF00141">
    <property type="entry name" value="peroxidase"/>
    <property type="match status" value="2"/>
</dbReference>
<dbReference type="PRINTS" id="PR00460">
    <property type="entry name" value="BPEROXIDASE"/>
</dbReference>
<dbReference type="PRINTS" id="PR00458">
    <property type="entry name" value="PEROXIDASE"/>
</dbReference>
<dbReference type="SUPFAM" id="SSF48113">
    <property type="entry name" value="Heme-dependent peroxidases"/>
    <property type="match status" value="2"/>
</dbReference>
<dbReference type="PROSITE" id="PS00435">
    <property type="entry name" value="PEROXIDASE_1"/>
    <property type="match status" value="1"/>
</dbReference>
<dbReference type="PROSITE" id="PS00436">
    <property type="entry name" value="PEROXIDASE_2"/>
    <property type="match status" value="1"/>
</dbReference>
<dbReference type="PROSITE" id="PS50873">
    <property type="entry name" value="PEROXIDASE_4"/>
    <property type="match status" value="1"/>
</dbReference>
<gene>
    <name evidence="1" type="primary">katG2</name>
    <name type="ordered locus">Bcenmc03_5078</name>
</gene>
<proteinExistence type="inferred from homology"/>
<comment type="function">
    <text evidence="1">Bifunctional enzyme with both catalase and broad-spectrum peroxidase activity.</text>
</comment>
<comment type="catalytic activity">
    <reaction evidence="1">
        <text>H2O2 + AH2 = A + 2 H2O</text>
        <dbReference type="Rhea" id="RHEA:30275"/>
        <dbReference type="ChEBI" id="CHEBI:13193"/>
        <dbReference type="ChEBI" id="CHEBI:15377"/>
        <dbReference type="ChEBI" id="CHEBI:16240"/>
        <dbReference type="ChEBI" id="CHEBI:17499"/>
        <dbReference type="EC" id="1.11.1.21"/>
    </reaction>
</comment>
<comment type="catalytic activity">
    <reaction evidence="1">
        <text>2 H2O2 = O2 + 2 H2O</text>
        <dbReference type="Rhea" id="RHEA:20309"/>
        <dbReference type="ChEBI" id="CHEBI:15377"/>
        <dbReference type="ChEBI" id="CHEBI:15379"/>
        <dbReference type="ChEBI" id="CHEBI:16240"/>
        <dbReference type="EC" id="1.11.1.21"/>
    </reaction>
</comment>
<comment type="cofactor">
    <cofactor evidence="1">
        <name>heme b</name>
        <dbReference type="ChEBI" id="CHEBI:60344"/>
    </cofactor>
    <text evidence="1">Binds 1 heme b (iron(II)-protoporphyrin IX) group per dimer.</text>
</comment>
<comment type="subunit">
    <text evidence="1">Homodimer or homotetramer.</text>
</comment>
<comment type="PTM">
    <text evidence="1">Formation of the three residue Trp-Tyr-Met cross-link is important for the catalase, but not the peroxidase activity of the enzyme.</text>
</comment>
<comment type="similarity">
    <text evidence="1">Belongs to the peroxidase family. Peroxidase/catalase subfamily.</text>
</comment>
<name>KATG2_BURO0</name>
<sequence length="728" mass="79926">MSNEGKCPFNHGKRNGTTNRDWWPNQLNLKILHQHSSEADPMDPGFDYAEAFNSLDLAAVKADLRALMTASQDWWPADFGHYGPFFVRMAWHSAGTYRTGDGRGGAGRGQQRFAPLNSWPDNVGLDKARRLIWPVKQKYGRKISWADLIVLTGNVALESMGFKTFGFAGGREDSWEPDEDVYWGMESTWLDDKRYSGDRQLETPLAAVQMGLIYVNPEGPNGNPDPLASARDIRETFARMAMNDEETVALIAGGHTFGKTHGAGDASHVGPEPEAAPLEQMGLGWKSSFGSGKAGDAIGSGLEVIWTSTPTQWSNNFFWNLFGYDWELTKSPAGAHQWQPKGGAGADSVPDPFEPGKRRVPTMLTSDIALRADPTYEKISRRFFENPNEFAEAFARAWFKLTHRDMGPRVRYLGPEVPSEELLWQDPIPMPDHPQVDEQDVSALKAKVLASGLSVSELVSTAWASASTFRGSDKRGGANGARVRLAPQKDWEVNQPAQLATVLEVLGALQVEFNRAATGGKQVSLADLIVIAGNAGVEQAAAAAGVEITVPFTPGRGDASAEQTDVDSMAVLEPIADGFRNYLKGAYTIPAEKLLIDKAQLLSLSAPEMTVLIGGLRVLGTNVGDSKHGVFTDRREVLTNDFFRNLLDMGTEWKPTSEANEAYEGRDRATGELKWLASRVDLVFGSHSQLRALSEVYGSEDSQQKFVRDFVAAWTKVMNADRFDIKHN</sequence>
<evidence type="ECO:0000255" key="1">
    <source>
        <dbReference type="HAMAP-Rule" id="MF_01961"/>
    </source>
</evidence>
<evidence type="ECO:0000256" key="2">
    <source>
        <dbReference type="SAM" id="MobiDB-lite"/>
    </source>
</evidence>
<accession>B1K6I9</accession>
<feature type="chain" id="PRO_0000354737" description="Catalase-peroxidase 2">
    <location>
        <begin position="1"/>
        <end position="728"/>
    </location>
</feature>
<feature type="region of interest" description="Disordered" evidence="2">
    <location>
        <begin position="1"/>
        <end position="20"/>
    </location>
</feature>
<feature type="region of interest" description="Disordered" evidence="2">
    <location>
        <begin position="335"/>
        <end position="355"/>
    </location>
</feature>
<feature type="active site" description="Proton acceptor" evidence="1">
    <location>
        <position position="92"/>
    </location>
</feature>
<feature type="binding site" description="axial binding residue" evidence="1">
    <location>
        <position position="255"/>
    </location>
    <ligand>
        <name>heme b</name>
        <dbReference type="ChEBI" id="CHEBI:60344"/>
    </ligand>
    <ligandPart>
        <name>Fe</name>
        <dbReference type="ChEBI" id="CHEBI:18248"/>
    </ligandPart>
</feature>
<feature type="site" description="Transition state stabilizer" evidence="1">
    <location>
        <position position="88"/>
    </location>
</feature>
<feature type="cross-link" description="Tryptophyl-tyrosyl-methioninium (Trp-Tyr) (with M-240)" evidence="1">
    <location>
        <begin position="91"/>
        <end position="214"/>
    </location>
</feature>
<feature type="cross-link" description="Tryptophyl-tyrosyl-methioninium (Tyr-Met) (with W-91)" evidence="1">
    <location>
        <begin position="214"/>
        <end position="240"/>
    </location>
</feature>
<reference key="1">
    <citation type="submission" date="2008-02" db="EMBL/GenBank/DDBJ databases">
        <title>Complete sequence of chromosome 2 of Burkholderia cenocepacia MC0-3.</title>
        <authorList>
            <person name="Copeland A."/>
            <person name="Lucas S."/>
            <person name="Lapidus A."/>
            <person name="Barry K."/>
            <person name="Bruce D."/>
            <person name="Goodwin L."/>
            <person name="Glavina del Rio T."/>
            <person name="Dalin E."/>
            <person name="Tice H."/>
            <person name="Pitluck S."/>
            <person name="Chain P."/>
            <person name="Malfatti S."/>
            <person name="Shin M."/>
            <person name="Vergez L."/>
            <person name="Schmutz J."/>
            <person name="Larimer F."/>
            <person name="Land M."/>
            <person name="Hauser L."/>
            <person name="Kyrpides N."/>
            <person name="Mikhailova N."/>
            <person name="Tiedje J."/>
            <person name="Richardson P."/>
        </authorList>
    </citation>
    <scope>NUCLEOTIDE SEQUENCE [LARGE SCALE GENOMIC DNA]</scope>
    <source>
        <strain>MC0-3</strain>
    </source>
</reference>
<keyword id="KW-0349">Heme</keyword>
<keyword id="KW-0376">Hydrogen peroxide</keyword>
<keyword id="KW-0408">Iron</keyword>
<keyword id="KW-0479">Metal-binding</keyword>
<keyword id="KW-0560">Oxidoreductase</keyword>
<keyword id="KW-0575">Peroxidase</keyword>
<organism>
    <name type="scientific">Burkholderia orbicola (strain MC0-3)</name>
    <dbReference type="NCBI Taxonomy" id="406425"/>
    <lineage>
        <taxon>Bacteria</taxon>
        <taxon>Pseudomonadati</taxon>
        <taxon>Pseudomonadota</taxon>
        <taxon>Betaproteobacteria</taxon>
        <taxon>Burkholderiales</taxon>
        <taxon>Burkholderiaceae</taxon>
        <taxon>Burkholderia</taxon>
        <taxon>Burkholderia cepacia complex</taxon>
        <taxon>Burkholderia orbicola</taxon>
    </lineage>
</organism>
<protein>
    <recommendedName>
        <fullName evidence="1">Catalase-peroxidase 2</fullName>
        <shortName evidence="1">CP 2</shortName>
        <ecNumber evidence="1">1.11.1.21</ecNumber>
    </recommendedName>
    <alternativeName>
        <fullName evidence="1">Peroxidase/catalase 2</fullName>
    </alternativeName>
</protein>